<dbReference type="EMBL" id="CP001339">
    <property type="protein sequence ID" value="ACL73378.1"/>
    <property type="molecule type" value="Genomic_DNA"/>
</dbReference>
<dbReference type="RefSeq" id="WP_012638854.1">
    <property type="nucleotide sequence ID" value="NC_011901.1"/>
</dbReference>
<dbReference type="SMR" id="B8GV32"/>
<dbReference type="STRING" id="396588.Tgr7_2298"/>
<dbReference type="KEGG" id="tgr:Tgr7_2298"/>
<dbReference type="eggNOG" id="COG0203">
    <property type="taxonomic scope" value="Bacteria"/>
</dbReference>
<dbReference type="HOGENOM" id="CLU_074407_2_0_6"/>
<dbReference type="OrthoDB" id="9809073at2"/>
<dbReference type="Proteomes" id="UP000002383">
    <property type="component" value="Chromosome"/>
</dbReference>
<dbReference type="GO" id="GO:0022625">
    <property type="term" value="C:cytosolic large ribosomal subunit"/>
    <property type="evidence" value="ECO:0007669"/>
    <property type="project" value="TreeGrafter"/>
</dbReference>
<dbReference type="GO" id="GO:0003735">
    <property type="term" value="F:structural constituent of ribosome"/>
    <property type="evidence" value="ECO:0007669"/>
    <property type="project" value="InterPro"/>
</dbReference>
<dbReference type="GO" id="GO:0006412">
    <property type="term" value="P:translation"/>
    <property type="evidence" value="ECO:0007669"/>
    <property type="project" value="UniProtKB-UniRule"/>
</dbReference>
<dbReference type="FunFam" id="3.90.1030.10:FF:000001">
    <property type="entry name" value="50S ribosomal protein L17"/>
    <property type="match status" value="1"/>
</dbReference>
<dbReference type="Gene3D" id="3.90.1030.10">
    <property type="entry name" value="Ribosomal protein L17"/>
    <property type="match status" value="1"/>
</dbReference>
<dbReference type="HAMAP" id="MF_01368">
    <property type="entry name" value="Ribosomal_bL17"/>
    <property type="match status" value="1"/>
</dbReference>
<dbReference type="InterPro" id="IPR000456">
    <property type="entry name" value="Ribosomal_bL17"/>
</dbReference>
<dbReference type="InterPro" id="IPR047859">
    <property type="entry name" value="Ribosomal_bL17_CS"/>
</dbReference>
<dbReference type="InterPro" id="IPR036373">
    <property type="entry name" value="Ribosomal_bL17_sf"/>
</dbReference>
<dbReference type="NCBIfam" id="TIGR00059">
    <property type="entry name" value="L17"/>
    <property type="match status" value="1"/>
</dbReference>
<dbReference type="PANTHER" id="PTHR14413:SF16">
    <property type="entry name" value="LARGE RIBOSOMAL SUBUNIT PROTEIN BL17M"/>
    <property type="match status" value="1"/>
</dbReference>
<dbReference type="PANTHER" id="PTHR14413">
    <property type="entry name" value="RIBOSOMAL PROTEIN L17"/>
    <property type="match status" value="1"/>
</dbReference>
<dbReference type="Pfam" id="PF01196">
    <property type="entry name" value="Ribosomal_L17"/>
    <property type="match status" value="1"/>
</dbReference>
<dbReference type="SUPFAM" id="SSF64263">
    <property type="entry name" value="Prokaryotic ribosomal protein L17"/>
    <property type="match status" value="1"/>
</dbReference>
<dbReference type="PROSITE" id="PS01167">
    <property type="entry name" value="RIBOSOMAL_L17"/>
    <property type="match status" value="1"/>
</dbReference>
<protein>
    <recommendedName>
        <fullName evidence="1">Large ribosomal subunit protein bL17</fullName>
    </recommendedName>
    <alternativeName>
        <fullName evidence="2">50S ribosomal protein L17</fullName>
    </alternativeName>
</protein>
<evidence type="ECO:0000255" key="1">
    <source>
        <dbReference type="HAMAP-Rule" id="MF_01368"/>
    </source>
</evidence>
<evidence type="ECO:0000305" key="2"/>
<reference key="1">
    <citation type="journal article" date="2011" name="Stand. Genomic Sci.">
        <title>Complete genome sequence of 'Thioalkalivibrio sulfidophilus' HL-EbGr7.</title>
        <authorList>
            <person name="Muyzer G."/>
            <person name="Sorokin D.Y."/>
            <person name="Mavromatis K."/>
            <person name="Lapidus A."/>
            <person name="Clum A."/>
            <person name="Ivanova N."/>
            <person name="Pati A."/>
            <person name="d'Haeseleer P."/>
            <person name="Woyke T."/>
            <person name="Kyrpides N.C."/>
        </authorList>
    </citation>
    <scope>NUCLEOTIDE SEQUENCE [LARGE SCALE GENOMIC DNA]</scope>
    <source>
        <strain>HL-EbGR7</strain>
    </source>
</reference>
<accession>B8GV32</accession>
<name>RL17_THISH</name>
<organism>
    <name type="scientific">Thioalkalivibrio sulfidiphilus (strain HL-EbGR7)</name>
    <dbReference type="NCBI Taxonomy" id="396588"/>
    <lineage>
        <taxon>Bacteria</taxon>
        <taxon>Pseudomonadati</taxon>
        <taxon>Pseudomonadota</taxon>
        <taxon>Gammaproteobacteria</taxon>
        <taxon>Chromatiales</taxon>
        <taxon>Ectothiorhodospiraceae</taxon>
        <taxon>Thioalkalivibrio</taxon>
    </lineage>
</organism>
<feature type="chain" id="PRO_1000184053" description="Large ribosomal subunit protein bL17">
    <location>
        <begin position="1"/>
        <end position="134"/>
    </location>
</feature>
<gene>
    <name evidence="1" type="primary">rplQ</name>
    <name type="ordered locus">Tgr7_2298</name>
</gene>
<keyword id="KW-1185">Reference proteome</keyword>
<keyword id="KW-0687">Ribonucleoprotein</keyword>
<keyword id="KW-0689">Ribosomal protein</keyword>
<sequence length="134" mass="15331">MRHRNSGRQLSRNSAHRKATLQNMTASLFRHEVIKTTLPKAKELRRVAEPLITLAKVDNVHKRRVAFARLRDKEMVGKLFQELGPRYQTRPGGYMRILKCGNRPGDNAPMAFVELVDRPELTEEAPAVESAKEE</sequence>
<proteinExistence type="inferred from homology"/>
<comment type="subunit">
    <text evidence="1">Part of the 50S ribosomal subunit. Contacts protein L32.</text>
</comment>
<comment type="similarity">
    <text evidence="1">Belongs to the bacterial ribosomal protein bL17 family.</text>
</comment>